<evidence type="ECO:0000255" key="1">
    <source>
        <dbReference type="HAMAP-Rule" id="MF_01690"/>
    </source>
</evidence>
<evidence type="ECO:0000305" key="2"/>
<protein>
    <recommendedName>
        <fullName evidence="1">Succinyl-diaminopimelate desuccinylase</fullName>
        <shortName evidence="1">SDAP desuccinylase</shortName>
        <ecNumber evidence="1">3.5.1.18</ecNumber>
    </recommendedName>
    <alternativeName>
        <fullName evidence="1">N-succinyl-LL-2,6-diaminoheptanedioate amidohydrolase</fullName>
    </alternativeName>
</protein>
<name>DAPE_SINMW</name>
<accession>A6U5J1</accession>
<gene>
    <name evidence="1" type="primary">dapE</name>
    <name type="ordered locus">Smed_0061</name>
</gene>
<proteinExistence type="inferred from homology"/>
<keyword id="KW-0028">Amino-acid biosynthesis</keyword>
<keyword id="KW-0170">Cobalt</keyword>
<keyword id="KW-0220">Diaminopimelate biosynthesis</keyword>
<keyword id="KW-0378">Hydrolase</keyword>
<keyword id="KW-0457">Lysine biosynthesis</keyword>
<keyword id="KW-0479">Metal-binding</keyword>
<keyword id="KW-0862">Zinc</keyword>
<reference key="1">
    <citation type="submission" date="2007-06" db="EMBL/GenBank/DDBJ databases">
        <title>Complete sequence of Sinorhizobium medicae WSM419 chromosome.</title>
        <authorList>
            <consortium name="US DOE Joint Genome Institute"/>
            <person name="Copeland A."/>
            <person name="Lucas S."/>
            <person name="Lapidus A."/>
            <person name="Barry K."/>
            <person name="Glavina del Rio T."/>
            <person name="Dalin E."/>
            <person name="Tice H."/>
            <person name="Pitluck S."/>
            <person name="Chain P."/>
            <person name="Malfatti S."/>
            <person name="Shin M."/>
            <person name="Vergez L."/>
            <person name="Schmutz J."/>
            <person name="Larimer F."/>
            <person name="Land M."/>
            <person name="Hauser L."/>
            <person name="Kyrpides N."/>
            <person name="Mikhailova N."/>
            <person name="Reeve W.G."/>
            <person name="Richardson P."/>
        </authorList>
    </citation>
    <scope>NUCLEOTIDE SEQUENCE [LARGE SCALE GENOMIC DNA]</scope>
    <source>
        <strain>WSM419</strain>
    </source>
</reference>
<sequence>MFPTDPVSNLATLIRCPSVTPAEGGALTALESMLTPIGFKADRIVAREAGTPDIENLYARIGVGGPHLMFAGHTDVVPVGDEIAWSHPPFSAAIAEGEMYGRGAVDMKGGIACFVAAVARHIEKHGAPKGSISFLITGDEEGPAINGTVKLLEWAAAKGERWDACLVGEPTNPGGIGEMIKIGRRGSLSGRITVQGVQGHAAYPHLADNPVRSILQLAHALMDPPFDDGTENFQPSNLEVTTIDVGNAAVNVIPAKASAAFNVRFNDLWTAESLMTEIVARLDRAASAGALRPGRAPVKYEIVWNERPSHVFLTRNDALIESLSGAVEAVTGQQPRLSTTGGTSDARFIKDYCPVVEFGLVGKTMHMVDERVALADLETLTGIYETFIARWFDHAAA</sequence>
<feature type="chain" id="PRO_0000375753" description="Succinyl-diaminopimelate desuccinylase">
    <location>
        <begin position="1"/>
        <end position="397"/>
    </location>
</feature>
<feature type="active site" evidence="1">
    <location>
        <position position="75"/>
    </location>
</feature>
<feature type="active site" description="Proton acceptor" evidence="1">
    <location>
        <position position="140"/>
    </location>
</feature>
<feature type="binding site" evidence="1">
    <location>
        <position position="73"/>
    </location>
    <ligand>
        <name>Zn(2+)</name>
        <dbReference type="ChEBI" id="CHEBI:29105"/>
        <label>1</label>
    </ligand>
</feature>
<feature type="binding site" evidence="1">
    <location>
        <position position="106"/>
    </location>
    <ligand>
        <name>Zn(2+)</name>
        <dbReference type="ChEBI" id="CHEBI:29105"/>
        <label>1</label>
    </ligand>
</feature>
<feature type="binding site" evidence="1">
    <location>
        <position position="106"/>
    </location>
    <ligand>
        <name>Zn(2+)</name>
        <dbReference type="ChEBI" id="CHEBI:29105"/>
        <label>2</label>
    </ligand>
</feature>
<feature type="binding site" evidence="1">
    <location>
        <position position="141"/>
    </location>
    <ligand>
        <name>Zn(2+)</name>
        <dbReference type="ChEBI" id="CHEBI:29105"/>
        <label>2</label>
    </ligand>
</feature>
<feature type="binding site" evidence="1">
    <location>
        <position position="169"/>
    </location>
    <ligand>
        <name>Zn(2+)</name>
        <dbReference type="ChEBI" id="CHEBI:29105"/>
        <label>1</label>
    </ligand>
</feature>
<feature type="binding site" evidence="1">
    <location>
        <position position="366"/>
    </location>
    <ligand>
        <name>Zn(2+)</name>
        <dbReference type="ChEBI" id="CHEBI:29105"/>
        <label>2</label>
    </ligand>
</feature>
<organism>
    <name type="scientific">Sinorhizobium medicae (strain WSM419)</name>
    <name type="common">Ensifer medicae</name>
    <dbReference type="NCBI Taxonomy" id="366394"/>
    <lineage>
        <taxon>Bacteria</taxon>
        <taxon>Pseudomonadati</taxon>
        <taxon>Pseudomonadota</taxon>
        <taxon>Alphaproteobacteria</taxon>
        <taxon>Hyphomicrobiales</taxon>
        <taxon>Rhizobiaceae</taxon>
        <taxon>Sinorhizobium/Ensifer group</taxon>
        <taxon>Sinorhizobium</taxon>
    </lineage>
</organism>
<dbReference type="EC" id="3.5.1.18" evidence="1"/>
<dbReference type="EMBL" id="CP000738">
    <property type="protein sequence ID" value="ABR58921.1"/>
    <property type="status" value="ALT_INIT"/>
    <property type="molecule type" value="Genomic_DNA"/>
</dbReference>
<dbReference type="RefSeq" id="WP_024325029.1">
    <property type="nucleotide sequence ID" value="NC_009636.1"/>
</dbReference>
<dbReference type="RefSeq" id="YP_001325756.1">
    <property type="nucleotide sequence ID" value="NC_009636.1"/>
</dbReference>
<dbReference type="SMR" id="A6U5J1"/>
<dbReference type="STRING" id="366394.Smed_0061"/>
<dbReference type="GeneID" id="61611188"/>
<dbReference type="KEGG" id="smd:Smed_0061"/>
<dbReference type="PATRIC" id="fig|366394.8.peg.3116"/>
<dbReference type="eggNOG" id="COG0624">
    <property type="taxonomic scope" value="Bacteria"/>
</dbReference>
<dbReference type="HOGENOM" id="CLU_021802_4_0_5"/>
<dbReference type="OrthoDB" id="9809784at2"/>
<dbReference type="UniPathway" id="UPA00034">
    <property type="reaction ID" value="UER00021"/>
</dbReference>
<dbReference type="Proteomes" id="UP000001108">
    <property type="component" value="Chromosome"/>
</dbReference>
<dbReference type="GO" id="GO:0008777">
    <property type="term" value="F:acetylornithine deacetylase activity"/>
    <property type="evidence" value="ECO:0007669"/>
    <property type="project" value="TreeGrafter"/>
</dbReference>
<dbReference type="GO" id="GO:0050897">
    <property type="term" value="F:cobalt ion binding"/>
    <property type="evidence" value="ECO:0007669"/>
    <property type="project" value="UniProtKB-UniRule"/>
</dbReference>
<dbReference type="GO" id="GO:0009014">
    <property type="term" value="F:succinyl-diaminopimelate desuccinylase activity"/>
    <property type="evidence" value="ECO:0007669"/>
    <property type="project" value="UniProtKB-UniRule"/>
</dbReference>
<dbReference type="GO" id="GO:0008270">
    <property type="term" value="F:zinc ion binding"/>
    <property type="evidence" value="ECO:0007669"/>
    <property type="project" value="UniProtKB-UniRule"/>
</dbReference>
<dbReference type="GO" id="GO:0019877">
    <property type="term" value="P:diaminopimelate biosynthetic process"/>
    <property type="evidence" value="ECO:0007669"/>
    <property type="project" value="UniProtKB-UniRule"/>
</dbReference>
<dbReference type="GO" id="GO:0006526">
    <property type="term" value="P:L-arginine biosynthetic process"/>
    <property type="evidence" value="ECO:0007669"/>
    <property type="project" value="TreeGrafter"/>
</dbReference>
<dbReference type="GO" id="GO:0009089">
    <property type="term" value="P:lysine biosynthetic process via diaminopimelate"/>
    <property type="evidence" value="ECO:0007669"/>
    <property type="project" value="UniProtKB-UniRule"/>
</dbReference>
<dbReference type="CDD" id="cd03891">
    <property type="entry name" value="M20_DapE_proteobac"/>
    <property type="match status" value="1"/>
</dbReference>
<dbReference type="Gene3D" id="3.30.70.360">
    <property type="match status" value="1"/>
</dbReference>
<dbReference type="Gene3D" id="3.40.630.10">
    <property type="entry name" value="Zn peptidases"/>
    <property type="match status" value="2"/>
</dbReference>
<dbReference type="HAMAP" id="MF_01690">
    <property type="entry name" value="DapE"/>
    <property type="match status" value="1"/>
</dbReference>
<dbReference type="InterPro" id="IPR001261">
    <property type="entry name" value="ArgE/DapE_CS"/>
</dbReference>
<dbReference type="InterPro" id="IPR036264">
    <property type="entry name" value="Bact_exopeptidase_dim_dom"/>
</dbReference>
<dbReference type="InterPro" id="IPR005941">
    <property type="entry name" value="DapE_proteobac"/>
</dbReference>
<dbReference type="InterPro" id="IPR002933">
    <property type="entry name" value="Peptidase_M20"/>
</dbReference>
<dbReference type="InterPro" id="IPR011650">
    <property type="entry name" value="Peptidase_M20_dimer"/>
</dbReference>
<dbReference type="InterPro" id="IPR050072">
    <property type="entry name" value="Peptidase_M20A"/>
</dbReference>
<dbReference type="NCBIfam" id="TIGR01246">
    <property type="entry name" value="dapE_proteo"/>
    <property type="match status" value="1"/>
</dbReference>
<dbReference type="NCBIfam" id="NF009557">
    <property type="entry name" value="PRK13009.1"/>
    <property type="match status" value="1"/>
</dbReference>
<dbReference type="PANTHER" id="PTHR43808">
    <property type="entry name" value="ACETYLORNITHINE DEACETYLASE"/>
    <property type="match status" value="1"/>
</dbReference>
<dbReference type="PANTHER" id="PTHR43808:SF31">
    <property type="entry name" value="N-ACETYL-L-CITRULLINE DEACETYLASE"/>
    <property type="match status" value="1"/>
</dbReference>
<dbReference type="Pfam" id="PF07687">
    <property type="entry name" value="M20_dimer"/>
    <property type="match status" value="1"/>
</dbReference>
<dbReference type="Pfam" id="PF01546">
    <property type="entry name" value="Peptidase_M20"/>
    <property type="match status" value="1"/>
</dbReference>
<dbReference type="SUPFAM" id="SSF55031">
    <property type="entry name" value="Bacterial exopeptidase dimerisation domain"/>
    <property type="match status" value="1"/>
</dbReference>
<dbReference type="SUPFAM" id="SSF53187">
    <property type="entry name" value="Zn-dependent exopeptidases"/>
    <property type="match status" value="1"/>
</dbReference>
<dbReference type="PROSITE" id="PS00758">
    <property type="entry name" value="ARGE_DAPE_CPG2_1"/>
    <property type="match status" value="1"/>
</dbReference>
<dbReference type="PROSITE" id="PS00759">
    <property type="entry name" value="ARGE_DAPE_CPG2_2"/>
    <property type="match status" value="1"/>
</dbReference>
<comment type="function">
    <text evidence="1">Catalyzes the hydrolysis of N-succinyl-L,L-diaminopimelic acid (SDAP), forming succinate and LL-2,6-diaminopimelate (DAP), an intermediate involved in the bacterial biosynthesis of lysine and meso-diaminopimelic acid, an essential component of bacterial cell walls.</text>
</comment>
<comment type="catalytic activity">
    <reaction evidence="1">
        <text>N-succinyl-(2S,6S)-2,6-diaminopimelate + H2O = (2S,6S)-2,6-diaminopimelate + succinate</text>
        <dbReference type="Rhea" id="RHEA:22608"/>
        <dbReference type="ChEBI" id="CHEBI:15377"/>
        <dbReference type="ChEBI" id="CHEBI:30031"/>
        <dbReference type="ChEBI" id="CHEBI:57609"/>
        <dbReference type="ChEBI" id="CHEBI:58087"/>
        <dbReference type="EC" id="3.5.1.18"/>
    </reaction>
</comment>
<comment type="cofactor">
    <cofactor evidence="1">
        <name>Zn(2+)</name>
        <dbReference type="ChEBI" id="CHEBI:29105"/>
    </cofactor>
    <cofactor evidence="1">
        <name>Co(2+)</name>
        <dbReference type="ChEBI" id="CHEBI:48828"/>
    </cofactor>
    <text evidence="1">Binds 2 Zn(2+) or Co(2+) ions per subunit.</text>
</comment>
<comment type="pathway">
    <text evidence="1">Amino-acid biosynthesis; L-lysine biosynthesis via DAP pathway; LL-2,6-diaminopimelate from (S)-tetrahydrodipicolinate (succinylase route): step 3/3.</text>
</comment>
<comment type="subunit">
    <text evidence="1">Homodimer.</text>
</comment>
<comment type="similarity">
    <text evidence="1">Belongs to the peptidase M20A family. DapE subfamily.</text>
</comment>
<comment type="sequence caution" evidence="2">
    <conflict type="erroneous initiation">
        <sequence resource="EMBL-CDS" id="ABR58921"/>
    </conflict>
</comment>